<accession>Q0JQ12</accession>
<evidence type="ECO:0000250" key="1"/>
<evidence type="ECO:0000250" key="2">
    <source>
        <dbReference type="UniProtKB" id="Q6Z955"/>
    </source>
</evidence>
<evidence type="ECO:0000250" key="3">
    <source>
        <dbReference type="UniProtKB" id="Q8LNV6"/>
    </source>
</evidence>
<evidence type="ECO:0000250" key="4">
    <source>
        <dbReference type="UniProtKB" id="Q9T0N8"/>
    </source>
</evidence>
<evidence type="ECO:0000255" key="5"/>
<evidence type="ECO:0000255" key="6">
    <source>
        <dbReference type="PROSITE-ProRule" id="PRU00718"/>
    </source>
</evidence>
<evidence type="ECO:0000305" key="7"/>
<reference key="1">
    <citation type="journal article" date="2002" name="Nature">
        <title>The genome sequence and structure of rice chromosome 1.</title>
        <authorList>
            <person name="Sasaki T."/>
            <person name="Matsumoto T."/>
            <person name="Yamamoto K."/>
            <person name="Sakata K."/>
            <person name="Baba T."/>
            <person name="Katayose Y."/>
            <person name="Wu J."/>
            <person name="Niimura Y."/>
            <person name="Cheng Z."/>
            <person name="Nagamura Y."/>
            <person name="Antonio B.A."/>
            <person name="Kanamori H."/>
            <person name="Hosokawa S."/>
            <person name="Masukawa M."/>
            <person name="Arikawa K."/>
            <person name="Chiden Y."/>
            <person name="Hayashi M."/>
            <person name="Okamoto M."/>
            <person name="Ando T."/>
            <person name="Aoki H."/>
            <person name="Arita K."/>
            <person name="Hamada M."/>
            <person name="Harada C."/>
            <person name="Hijishita S."/>
            <person name="Honda M."/>
            <person name="Ichikawa Y."/>
            <person name="Idonuma A."/>
            <person name="Iijima M."/>
            <person name="Ikeda M."/>
            <person name="Ikeno M."/>
            <person name="Ito S."/>
            <person name="Ito T."/>
            <person name="Ito Y."/>
            <person name="Ito Y."/>
            <person name="Iwabuchi A."/>
            <person name="Kamiya K."/>
            <person name="Karasawa W."/>
            <person name="Katagiri S."/>
            <person name="Kikuta A."/>
            <person name="Kobayashi N."/>
            <person name="Kono I."/>
            <person name="Machita K."/>
            <person name="Maehara T."/>
            <person name="Mizuno H."/>
            <person name="Mizubayashi T."/>
            <person name="Mukai Y."/>
            <person name="Nagasaki H."/>
            <person name="Nakashima M."/>
            <person name="Nakama Y."/>
            <person name="Nakamichi Y."/>
            <person name="Nakamura M."/>
            <person name="Namiki N."/>
            <person name="Negishi M."/>
            <person name="Ohta I."/>
            <person name="Ono N."/>
            <person name="Saji S."/>
            <person name="Sakai K."/>
            <person name="Shibata M."/>
            <person name="Shimokawa T."/>
            <person name="Shomura A."/>
            <person name="Song J."/>
            <person name="Takazaki Y."/>
            <person name="Terasawa K."/>
            <person name="Tsuji K."/>
            <person name="Waki K."/>
            <person name="Yamagata H."/>
            <person name="Yamane H."/>
            <person name="Yoshiki S."/>
            <person name="Yoshihara R."/>
            <person name="Yukawa K."/>
            <person name="Zhong H."/>
            <person name="Iwama H."/>
            <person name="Endo T."/>
            <person name="Ito H."/>
            <person name="Hahn J.H."/>
            <person name="Kim H.-I."/>
            <person name="Eun M.-Y."/>
            <person name="Yano M."/>
            <person name="Jiang J."/>
            <person name="Gojobori T."/>
        </authorList>
    </citation>
    <scope>NUCLEOTIDE SEQUENCE [LARGE SCALE GENOMIC DNA]</scope>
    <source>
        <strain>cv. Nipponbare</strain>
    </source>
</reference>
<reference key="2">
    <citation type="journal article" date="2005" name="Nature">
        <title>The map-based sequence of the rice genome.</title>
        <authorList>
            <consortium name="International rice genome sequencing project (IRGSP)"/>
        </authorList>
    </citation>
    <scope>NUCLEOTIDE SEQUENCE [LARGE SCALE GENOMIC DNA]</scope>
    <source>
        <strain>cv. Nipponbare</strain>
    </source>
</reference>
<reference key="3">
    <citation type="journal article" date="2008" name="Nucleic Acids Res.">
        <title>The rice annotation project database (RAP-DB): 2008 update.</title>
        <authorList>
            <consortium name="The rice annotation project (RAP)"/>
        </authorList>
    </citation>
    <scope>GENOME REANNOTATION</scope>
    <source>
        <strain>cv. Nipponbare</strain>
    </source>
</reference>
<reference key="4">
    <citation type="journal article" date="2013" name="Rice">
        <title>Improvement of the Oryza sativa Nipponbare reference genome using next generation sequence and optical map data.</title>
        <authorList>
            <person name="Kawahara Y."/>
            <person name="de la Bastide M."/>
            <person name="Hamilton J.P."/>
            <person name="Kanamori H."/>
            <person name="McCombie W.R."/>
            <person name="Ouyang S."/>
            <person name="Schwartz D.C."/>
            <person name="Tanaka T."/>
            <person name="Wu J."/>
            <person name="Zhou S."/>
            <person name="Childs K.L."/>
            <person name="Davidson R.M."/>
            <person name="Lin H."/>
            <person name="Quesada-Ocampo L."/>
            <person name="Vaillancourt B."/>
            <person name="Sakai H."/>
            <person name="Lee S.S."/>
            <person name="Kim J."/>
            <person name="Numa H."/>
            <person name="Itoh T."/>
            <person name="Buell C.R."/>
            <person name="Matsumoto T."/>
        </authorList>
    </citation>
    <scope>GENOME REANNOTATION</scope>
    <source>
        <strain>cv. Nipponbare</strain>
    </source>
</reference>
<reference key="5">
    <citation type="journal article" date="2003" name="J. Plant Res.">
        <title>Structure and function of cytokinin oxidase/dehydrogenase genes of maize, rice, Arabidopsis and other species.</title>
        <authorList>
            <person name="Schmuelling T."/>
            <person name="Werner T."/>
            <person name="Riefler M."/>
            <person name="Krupkova E."/>
            <person name="Bartrina y Manns I."/>
        </authorList>
    </citation>
    <scope>REVIEW</scope>
</reference>
<reference key="6">
    <citation type="journal article" date="2005" name="Science">
        <title>Cytokinin oxidase regulates rice grain production.</title>
        <authorList>
            <person name="Ashikari M."/>
            <person name="Sakakibara H."/>
            <person name="Lin S."/>
            <person name="Yamamoto T."/>
            <person name="Takashi T."/>
            <person name="Nishimura A."/>
            <person name="Angeles E.R."/>
            <person name="Qian Q."/>
            <person name="Kitano H."/>
            <person name="Matsuoka M."/>
        </authorList>
    </citation>
    <scope>GENE FAMILY</scope>
    <scope>NOMENCLATURE</scope>
    <source>
        <strain>cv. Koshihikari</strain>
    </source>
</reference>
<protein>
    <recommendedName>
        <fullName>Cytokinin dehydrogenase 1</fullName>
        <ecNumber evidence="3">1.5.99.12</ecNumber>
    </recommendedName>
    <alternativeName>
        <fullName>Cytokinin oxidase 1</fullName>
        <shortName>OsCKX1</shortName>
    </alternativeName>
</protein>
<gene>
    <name type="primary">CKX1</name>
    <name type="ordered locus">Os01g0187600</name>
    <name type="ordered locus">LOC_Os01g09260</name>
    <name type="ORF">P0512G09.11</name>
</gene>
<comment type="function">
    <text evidence="2">Catalyzes the oxidation of cytokinins, a family of N(6)-substituted adenine derivatives that are plant hormones, where the substituent is an isopentenyl group.</text>
</comment>
<comment type="catalytic activity">
    <reaction evidence="3">
        <text>N(6)-dimethylallyladenine + A + H2O = 3-methyl-2-butenal + adenine + AH2</text>
        <dbReference type="Rhea" id="RHEA:13625"/>
        <dbReference type="ChEBI" id="CHEBI:13193"/>
        <dbReference type="ChEBI" id="CHEBI:15377"/>
        <dbReference type="ChEBI" id="CHEBI:15825"/>
        <dbReference type="ChEBI" id="CHEBI:16708"/>
        <dbReference type="ChEBI" id="CHEBI:17499"/>
        <dbReference type="ChEBI" id="CHEBI:17660"/>
        <dbReference type="EC" id="1.5.99.12"/>
    </reaction>
</comment>
<comment type="cofactor">
    <cofactor evidence="3">
        <name>FAD</name>
        <dbReference type="ChEBI" id="CHEBI:57692"/>
    </cofactor>
</comment>
<comment type="subunit">
    <text evidence="1">Monomer.</text>
</comment>
<comment type="subcellular location">
    <subcellularLocation>
        <location evidence="1">Secreted</location>
        <location evidence="1">Extracellular space</location>
    </subcellularLocation>
</comment>
<comment type="similarity">
    <text evidence="7">Belongs to the oxygen-dependent FAD-linked oxidoreductase family.</text>
</comment>
<comment type="sequence caution" evidence="7">
    <conflict type="erroneous gene model prediction">
        <sequence resource="EMBL-CDS" id="BAF04166"/>
    </conflict>
</comment>
<dbReference type="EC" id="1.5.99.12" evidence="3"/>
<dbReference type="EMBL" id="AP002836">
    <property type="status" value="NOT_ANNOTATED_CDS"/>
    <property type="molecule type" value="Genomic_DNA"/>
</dbReference>
<dbReference type="EMBL" id="AP008207">
    <property type="protein sequence ID" value="BAF04166.1"/>
    <property type="status" value="ALT_SEQ"/>
    <property type="molecule type" value="Genomic_DNA"/>
</dbReference>
<dbReference type="EMBL" id="AP014957">
    <property type="status" value="NOT_ANNOTATED_CDS"/>
    <property type="molecule type" value="Genomic_DNA"/>
</dbReference>
<dbReference type="RefSeq" id="XP_015635851.1">
    <property type="nucleotide sequence ID" value="XM_015780365.1"/>
</dbReference>
<dbReference type="SMR" id="Q0JQ12"/>
<dbReference type="FunCoup" id="Q0JQ12">
    <property type="interactions" value="93"/>
</dbReference>
<dbReference type="STRING" id="39947.Q0JQ12"/>
<dbReference type="GlyCosmos" id="Q0JQ12">
    <property type="glycosylation" value="5 sites, No reported glycans"/>
</dbReference>
<dbReference type="PaxDb" id="39947-Q0JQ12"/>
<dbReference type="KEGG" id="dosa:Os01g0187600"/>
<dbReference type="eggNOG" id="KOG1231">
    <property type="taxonomic scope" value="Eukaryota"/>
</dbReference>
<dbReference type="HOGENOM" id="CLU_1178012_0_0_1"/>
<dbReference type="InParanoid" id="Q0JQ12"/>
<dbReference type="OrthoDB" id="415825at2759"/>
<dbReference type="Proteomes" id="UP000000763">
    <property type="component" value="Chromosome 1"/>
</dbReference>
<dbReference type="Proteomes" id="UP000059680">
    <property type="component" value="Chromosome 1"/>
</dbReference>
<dbReference type="GO" id="GO:0005576">
    <property type="term" value="C:extracellular region"/>
    <property type="evidence" value="ECO:0007669"/>
    <property type="project" value="UniProtKB-SubCell"/>
</dbReference>
<dbReference type="GO" id="GO:0019139">
    <property type="term" value="F:cytokinin dehydrogenase activity"/>
    <property type="evidence" value="ECO:0007669"/>
    <property type="project" value="UniProtKB-EC"/>
</dbReference>
<dbReference type="GO" id="GO:0071949">
    <property type="term" value="F:FAD binding"/>
    <property type="evidence" value="ECO:0007669"/>
    <property type="project" value="InterPro"/>
</dbReference>
<dbReference type="GO" id="GO:0016491">
    <property type="term" value="F:oxidoreductase activity"/>
    <property type="evidence" value="ECO:0000318"/>
    <property type="project" value="GO_Central"/>
</dbReference>
<dbReference type="GO" id="GO:0009690">
    <property type="term" value="P:cytokinin metabolic process"/>
    <property type="evidence" value="ECO:0007669"/>
    <property type="project" value="InterPro"/>
</dbReference>
<dbReference type="Gene3D" id="3.30.465.10">
    <property type="match status" value="1"/>
</dbReference>
<dbReference type="Gene3D" id="3.40.462.10">
    <property type="entry name" value="FAD-linked oxidases, C-terminal domain"/>
    <property type="match status" value="1"/>
</dbReference>
<dbReference type="Gene3D" id="3.30.43.10">
    <property type="entry name" value="Uridine Diphospho-n-acetylenolpyruvylglucosamine Reductase, domain 2"/>
    <property type="match status" value="1"/>
</dbReference>
<dbReference type="InterPro" id="IPR016170">
    <property type="entry name" value="Cytok_DH_C_sf"/>
</dbReference>
<dbReference type="InterPro" id="IPR015345">
    <property type="entry name" value="Cytokinin_DH_FAD/cytokin-bd"/>
</dbReference>
<dbReference type="InterPro" id="IPR016166">
    <property type="entry name" value="FAD-bd_PCMH"/>
</dbReference>
<dbReference type="InterPro" id="IPR036318">
    <property type="entry name" value="FAD-bd_PCMH-like_sf"/>
</dbReference>
<dbReference type="InterPro" id="IPR016167">
    <property type="entry name" value="FAD-bd_PCMH_sub1"/>
</dbReference>
<dbReference type="InterPro" id="IPR016169">
    <property type="entry name" value="FAD-bd_PCMH_sub2"/>
</dbReference>
<dbReference type="InterPro" id="IPR016164">
    <property type="entry name" value="FAD-linked_Oxase-like_C"/>
</dbReference>
<dbReference type="InterPro" id="IPR050432">
    <property type="entry name" value="FAD-linked_Oxidoreductases_BP"/>
</dbReference>
<dbReference type="InterPro" id="IPR006094">
    <property type="entry name" value="Oxid_FAD_bind_N"/>
</dbReference>
<dbReference type="InterPro" id="IPR006093">
    <property type="entry name" value="Oxy_OxRdtase_FAD_BS"/>
</dbReference>
<dbReference type="PANTHER" id="PTHR13878:SF42">
    <property type="entry name" value="CYTOKININ DEHYDROGENASE 1"/>
    <property type="match status" value="1"/>
</dbReference>
<dbReference type="PANTHER" id="PTHR13878">
    <property type="entry name" value="GULONOLACTONE OXIDASE"/>
    <property type="match status" value="1"/>
</dbReference>
<dbReference type="Pfam" id="PF09265">
    <property type="entry name" value="Cytokin-bind"/>
    <property type="match status" value="1"/>
</dbReference>
<dbReference type="Pfam" id="PF01565">
    <property type="entry name" value="FAD_binding_4"/>
    <property type="match status" value="1"/>
</dbReference>
<dbReference type="SUPFAM" id="SSF56176">
    <property type="entry name" value="FAD-binding/transporter-associated domain-like"/>
    <property type="match status" value="1"/>
</dbReference>
<dbReference type="SUPFAM" id="SSF55103">
    <property type="entry name" value="FAD-linked oxidases, C-terminal domain"/>
    <property type="match status" value="1"/>
</dbReference>
<dbReference type="PROSITE" id="PS51387">
    <property type="entry name" value="FAD_PCMH"/>
    <property type="match status" value="1"/>
</dbReference>
<dbReference type="PROSITE" id="PS00862">
    <property type="entry name" value="OX2_COVAL_FAD"/>
    <property type="match status" value="1"/>
</dbReference>
<feature type="signal peptide" evidence="5">
    <location>
        <begin position="1"/>
        <end position="17"/>
    </location>
</feature>
<feature type="chain" id="PRO_0000394204" description="Cytokinin dehydrogenase 1">
    <location>
        <begin position="18"/>
        <end position="532"/>
    </location>
</feature>
<feature type="domain" description="FAD-binding PCMH-type" evidence="6">
    <location>
        <begin position="65"/>
        <end position="244"/>
    </location>
</feature>
<feature type="binding site" evidence="4">
    <location>
        <position position="100"/>
    </location>
    <ligand>
        <name>FAD</name>
        <dbReference type="ChEBI" id="CHEBI:57692"/>
    </ligand>
</feature>
<feature type="binding site" evidence="4">
    <location>
        <position position="102"/>
    </location>
    <ligand>
        <name>FAD</name>
        <dbReference type="ChEBI" id="CHEBI:57692"/>
    </ligand>
</feature>
<feature type="binding site" evidence="4">
    <location>
        <position position="103"/>
    </location>
    <ligand>
        <name>FAD</name>
        <dbReference type="ChEBI" id="CHEBI:57692"/>
    </ligand>
</feature>
<feature type="binding site" evidence="4">
    <location>
        <position position="104"/>
    </location>
    <ligand>
        <name>FAD</name>
        <dbReference type="ChEBI" id="CHEBI:57692"/>
    </ligand>
</feature>
<feature type="binding site" evidence="4">
    <location>
        <position position="106"/>
    </location>
    <ligand>
        <name>FAD</name>
        <dbReference type="ChEBI" id="CHEBI:57692"/>
    </ligand>
</feature>
<feature type="binding site" evidence="4">
    <location>
        <position position="110"/>
    </location>
    <ligand>
        <name>FAD</name>
        <dbReference type="ChEBI" id="CHEBI:57692"/>
    </ligand>
</feature>
<feature type="binding site" evidence="4">
    <location>
        <position position="168"/>
    </location>
    <ligand>
        <name>FAD</name>
        <dbReference type="ChEBI" id="CHEBI:57692"/>
    </ligand>
</feature>
<feature type="binding site" evidence="4">
    <location>
        <position position="173"/>
    </location>
    <ligand>
        <name>FAD</name>
        <dbReference type="ChEBI" id="CHEBI:57692"/>
    </ligand>
</feature>
<feature type="binding site" evidence="4">
    <location>
        <position position="179"/>
    </location>
    <ligand>
        <name>FAD</name>
        <dbReference type="ChEBI" id="CHEBI:57692"/>
    </ligand>
</feature>
<feature type="binding site" evidence="4">
    <location>
        <position position="183"/>
    </location>
    <ligand>
        <name>FAD</name>
        <dbReference type="ChEBI" id="CHEBI:57692"/>
    </ligand>
</feature>
<feature type="binding site" evidence="4">
    <location>
        <position position="234"/>
    </location>
    <ligand>
        <name>FAD</name>
        <dbReference type="ChEBI" id="CHEBI:57692"/>
    </ligand>
</feature>
<feature type="binding site" evidence="4">
    <location>
        <position position="490"/>
    </location>
    <ligand>
        <name>FAD</name>
        <dbReference type="ChEBI" id="CHEBI:57692"/>
    </ligand>
</feature>
<feature type="binding site" evidence="4">
    <location>
        <position position="525"/>
    </location>
    <ligand>
        <name>FAD</name>
        <dbReference type="ChEBI" id="CHEBI:57692"/>
    </ligand>
</feature>
<feature type="binding site" evidence="4">
    <location>
        <position position="528"/>
    </location>
    <ligand>
        <name>FAD</name>
        <dbReference type="ChEBI" id="CHEBI:57692"/>
    </ligand>
</feature>
<feature type="modified residue" description="Pros-8alpha-FAD histidine" evidence="4">
    <location>
        <position position="105"/>
    </location>
</feature>
<feature type="glycosylation site" description="N-linked (GlcNAc...) asparagine" evidence="5">
    <location>
        <position position="52"/>
    </location>
</feature>
<feature type="glycosylation site" description="N-linked (GlcNAc...) asparagine" evidence="5">
    <location>
        <position position="63"/>
    </location>
</feature>
<feature type="glycosylation site" description="N-linked (GlcNAc...) asparagine" evidence="5">
    <location>
        <position position="133"/>
    </location>
</feature>
<feature type="glycosylation site" description="N-linked (GlcNAc...) asparagine" evidence="5">
    <location>
        <position position="321"/>
    </location>
</feature>
<feature type="glycosylation site" description="N-linked (GlcNAc...) asparagine" evidence="5">
    <location>
        <position position="432"/>
    </location>
</feature>
<name>CKX1_ORYSJ</name>
<sequence length="532" mass="56034">MAAIYLLIAALIASSHALAAHGAGGGVPLAAAAPLPFPGDLAASGKLRTDPNATVPASMDFGNITAALPAAVLFPGSPGDVAELLRAAYAAPGRPFTVSFRGRGHSTMGQALAAGGVVVHMQSMGGGGAPRINVSADGAYVDAGGEQLWVDVLRAALARGVAPRSWTDYLHLTVGGTLSNAGVSGQTYRHGPQISNVLELDVITGHGETVTCSKAVNSDLFDAVLGGLGQFGVITRARVAVEPAPARARWVRLVYADFAAFSADQERLVAARPDGSHGPWSYVEGAVYLAGRGLAVALKSSGGFFSDADAARVVALAAARNATAVYSIEATLNYAANATPSSVDAAVAAALGDLHFEEGFSFSRDVTYEEFLDRVYGEEEALEKAGLWRVPHPWLNLFVPGSRIADFDRGVFKGILQTATDIAGPLIIYPVNKSKWDAAMSAVTPEGEEEVFYVVSLLFSAVANDVAALEAQNRRILRFCDLAGIGYKAYLAHYDSRGDWVRHFGAKWDRFVQRKDKYDPKKLLSPGQDIFN</sequence>
<keyword id="KW-0274">FAD</keyword>
<keyword id="KW-0285">Flavoprotein</keyword>
<keyword id="KW-0325">Glycoprotein</keyword>
<keyword id="KW-0560">Oxidoreductase</keyword>
<keyword id="KW-1185">Reference proteome</keyword>
<keyword id="KW-0964">Secreted</keyword>
<keyword id="KW-0732">Signal</keyword>
<proteinExistence type="inferred from homology"/>
<organism>
    <name type="scientific">Oryza sativa subsp. japonica</name>
    <name type="common">Rice</name>
    <dbReference type="NCBI Taxonomy" id="39947"/>
    <lineage>
        <taxon>Eukaryota</taxon>
        <taxon>Viridiplantae</taxon>
        <taxon>Streptophyta</taxon>
        <taxon>Embryophyta</taxon>
        <taxon>Tracheophyta</taxon>
        <taxon>Spermatophyta</taxon>
        <taxon>Magnoliopsida</taxon>
        <taxon>Liliopsida</taxon>
        <taxon>Poales</taxon>
        <taxon>Poaceae</taxon>
        <taxon>BOP clade</taxon>
        <taxon>Oryzoideae</taxon>
        <taxon>Oryzeae</taxon>
        <taxon>Oryzinae</taxon>
        <taxon>Oryza</taxon>
        <taxon>Oryza sativa</taxon>
    </lineage>
</organism>